<comment type="function">
    <text evidence="7">Required for developmental angiogenesis, but not for vasculogenesis.</text>
</comment>
<comment type="subcellular location">
    <subcellularLocation>
        <location evidence="1">Cytoplasm</location>
    </subcellularLocation>
    <subcellularLocation>
        <location evidence="1">Cell membrane</location>
        <topology evidence="2">Lipid-anchor</topology>
    </subcellularLocation>
</comment>
<comment type="developmental stage">
    <text evidence="7">At 24 hpf, expression almost entirely restricted to the endothelial cells of the developing vasculature, with high levels in the major head and trunk vessels and also in the intersomitic vessels.</text>
</comment>
<comment type="disruption phenotype">
    <text evidence="7">Morpholino knockdown of the protein causes profound defects in angiogenesis. Although sprouting of the intersomitic vessels occurs, the endothelial cells fail to extend fully across the intersomic region and there is no apparent formation of the dorsal longitudinal anastomosing vessel. No other obvious defect is observed in the developing morphant.</text>
</comment>
<comment type="similarity">
    <text evidence="8">Belongs to the formin homology family.</text>
</comment>
<reference key="1">
    <citation type="journal article" date="2013" name="Nature">
        <title>The zebrafish reference genome sequence and its relationship to the human genome.</title>
        <authorList>
            <person name="Howe K."/>
            <person name="Clark M.D."/>
            <person name="Torroja C.F."/>
            <person name="Torrance J."/>
            <person name="Berthelot C."/>
            <person name="Muffato M."/>
            <person name="Collins J.E."/>
            <person name="Humphray S."/>
            <person name="McLaren K."/>
            <person name="Matthews L."/>
            <person name="McLaren S."/>
            <person name="Sealy I."/>
            <person name="Caccamo M."/>
            <person name="Churcher C."/>
            <person name="Scott C."/>
            <person name="Barrett J.C."/>
            <person name="Koch R."/>
            <person name="Rauch G.J."/>
            <person name="White S."/>
            <person name="Chow W."/>
            <person name="Kilian B."/>
            <person name="Quintais L.T."/>
            <person name="Guerra-Assuncao J.A."/>
            <person name="Zhou Y."/>
            <person name="Gu Y."/>
            <person name="Yen J."/>
            <person name="Vogel J.H."/>
            <person name="Eyre T."/>
            <person name="Redmond S."/>
            <person name="Banerjee R."/>
            <person name="Chi J."/>
            <person name="Fu B."/>
            <person name="Langley E."/>
            <person name="Maguire S.F."/>
            <person name="Laird G.K."/>
            <person name="Lloyd D."/>
            <person name="Kenyon E."/>
            <person name="Donaldson S."/>
            <person name="Sehra H."/>
            <person name="Almeida-King J."/>
            <person name="Loveland J."/>
            <person name="Trevanion S."/>
            <person name="Jones M."/>
            <person name="Quail M."/>
            <person name="Willey D."/>
            <person name="Hunt A."/>
            <person name="Burton J."/>
            <person name="Sims S."/>
            <person name="McLay K."/>
            <person name="Plumb B."/>
            <person name="Davis J."/>
            <person name="Clee C."/>
            <person name="Oliver K."/>
            <person name="Clark R."/>
            <person name="Riddle C."/>
            <person name="Elliot D."/>
            <person name="Threadgold G."/>
            <person name="Harden G."/>
            <person name="Ware D."/>
            <person name="Begum S."/>
            <person name="Mortimore B."/>
            <person name="Kerry G."/>
            <person name="Heath P."/>
            <person name="Phillimore B."/>
            <person name="Tracey A."/>
            <person name="Corby N."/>
            <person name="Dunn M."/>
            <person name="Johnson C."/>
            <person name="Wood J."/>
            <person name="Clark S."/>
            <person name="Pelan S."/>
            <person name="Griffiths G."/>
            <person name="Smith M."/>
            <person name="Glithero R."/>
            <person name="Howden P."/>
            <person name="Barker N."/>
            <person name="Lloyd C."/>
            <person name="Stevens C."/>
            <person name="Harley J."/>
            <person name="Holt K."/>
            <person name="Panagiotidis G."/>
            <person name="Lovell J."/>
            <person name="Beasley H."/>
            <person name="Henderson C."/>
            <person name="Gordon D."/>
            <person name="Auger K."/>
            <person name="Wright D."/>
            <person name="Collins J."/>
            <person name="Raisen C."/>
            <person name="Dyer L."/>
            <person name="Leung K."/>
            <person name="Robertson L."/>
            <person name="Ambridge K."/>
            <person name="Leongamornlert D."/>
            <person name="McGuire S."/>
            <person name="Gilderthorp R."/>
            <person name="Griffiths C."/>
            <person name="Manthravadi D."/>
            <person name="Nichol S."/>
            <person name="Barker G."/>
            <person name="Whitehead S."/>
            <person name="Kay M."/>
            <person name="Brown J."/>
            <person name="Murnane C."/>
            <person name="Gray E."/>
            <person name="Humphries M."/>
            <person name="Sycamore N."/>
            <person name="Barker D."/>
            <person name="Saunders D."/>
            <person name="Wallis J."/>
            <person name="Babbage A."/>
            <person name="Hammond S."/>
            <person name="Mashreghi-Mohammadi M."/>
            <person name="Barr L."/>
            <person name="Martin S."/>
            <person name="Wray P."/>
            <person name="Ellington A."/>
            <person name="Matthews N."/>
            <person name="Ellwood M."/>
            <person name="Woodmansey R."/>
            <person name="Clark G."/>
            <person name="Cooper J."/>
            <person name="Tromans A."/>
            <person name="Grafham D."/>
            <person name="Skuce C."/>
            <person name="Pandian R."/>
            <person name="Andrews R."/>
            <person name="Harrison E."/>
            <person name="Kimberley A."/>
            <person name="Garnett J."/>
            <person name="Fosker N."/>
            <person name="Hall R."/>
            <person name="Garner P."/>
            <person name="Kelly D."/>
            <person name="Bird C."/>
            <person name="Palmer S."/>
            <person name="Gehring I."/>
            <person name="Berger A."/>
            <person name="Dooley C.M."/>
            <person name="Ersan-Urun Z."/>
            <person name="Eser C."/>
            <person name="Geiger H."/>
            <person name="Geisler M."/>
            <person name="Karotki L."/>
            <person name="Kirn A."/>
            <person name="Konantz J."/>
            <person name="Konantz M."/>
            <person name="Oberlander M."/>
            <person name="Rudolph-Geiger S."/>
            <person name="Teucke M."/>
            <person name="Lanz C."/>
            <person name="Raddatz G."/>
            <person name="Osoegawa K."/>
            <person name="Zhu B."/>
            <person name="Rapp A."/>
            <person name="Widaa S."/>
            <person name="Langford C."/>
            <person name="Yang F."/>
            <person name="Schuster S.C."/>
            <person name="Carter N.P."/>
            <person name="Harrow J."/>
            <person name="Ning Z."/>
            <person name="Herrero J."/>
            <person name="Searle S.M."/>
            <person name="Enright A."/>
            <person name="Geisler R."/>
            <person name="Plasterk R.H."/>
            <person name="Lee C."/>
            <person name="Westerfield M."/>
            <person name="de Jong P.J."/>
            <person name="Zon L.I."/>
            <person name="Postlethwait J.H."/>
            <person name="Nusslein-Volhard C."/>
            <person name="Hubbard T.J."/>
            <person name="Roest Crollius H."/>
            <person name="Rogers J."/>
            <person name="Stemple D.L."/>
        </authorList>
    </citation>
    <scope>NUCLEOTIDE SEQUENCE [LARGE SCALE GENOMIC DNA]</scope>
    <source>
        <strain>Tuebingen</strain>
    </source>
</reference>
<reference key="2">
    <citation type="submission" date="2004-03" db="EMBL/GenBank/DDBJ databases">
        <authorList>
            <consortium name="NIH - Zebrafish Gene Collection (ZGC) project"/>
        </authorList>
    </citation>
    <scope>NUCLEOTIDE SEQUENCE [LARGE SCALE MRNA] OF 658-1047</scope>
    <source>
        <tissue>Kidney</tissue>
    </source>
</reference>
<reference key="3">
    <citation type="journal article" date="2012" name="J. Cell Sci.">
        <title>The formin FMNL3 is a cytoskeletal regulator of angiogenesis.</title>
        <authorList>
            <person name="Hetheridge C."/>
            <person name="Scott A.N."/>
            <person name="Swain R.K."/>
            <person name="Copeland J.W."/>
            <person name="Higgs H.N."/>
            <person name="Bicknell R."/>
            <person name="Mellor H."/>
        </authorList>
    </citation>
    <scope>FUNCTION</scope>
    <scope>DEVELOPMENTAL STAGE</scope>
    <scope>DISRUPTION PHENOTYPE</scope>
</reference>
<feature type="initiator methionine" description="Removed" evidence="2">
    <location>
        <position position="1"/>
    </location>
</feature>
<feature type="chain" id="PRO_0000433514" description="Formin-like protein 3">
    <location>
        <begin position="2"/>
        <end position="1047"/>
    </location>
</feature>
<feature type="domain" description="GBD/FH3" evidence="4">
    <location>
        <begin position="22"/>
        <end position="462"/>
    </location>
</feature>
<feature type="domain" description="FH2" evidence="5">
    <location>
        <begin position="580"/>
        <end position="970"/>
    </location>
</feature>
<feature type="domain" description="DAD" evidence="3">
    <location>
        <begin position="1000"/>
        <end position="1037"/>
    </location>
</feature>
<feature type="region of interest" description="Disordered" evidence="6">
    <location>
        <begin position="520"/>
        <end position="561"/>
    </location>
</feature>
<feature type="compositionally biased region" description="Pro residues" evidence="6">
    <location>
        <begin position="527"/>
        <end position="546"/>
    </location>
</feature>
<feature type="lipid moiety-binding region" description="N-myristoyl glycine" evidence="2">
    <location>
        <position position="2"/>
    </location>
</feature>
<name>FMNL3_DANRE</name>
<keyword id="KW-0009">Actin-binding</keyword>
<keyword id="KW-0037">Angiogenesis</keyword>
<keyword id="KW-1003">Cell membrane</keyword>
<keyword id="KW-0963">Cytoplasm</keyword>
<keyword id="KW-0217">Developmental protein</keyword>
<keyword id="KW-0449">Lipoprotein</keyword>
<keyword id="KW-0472">Membrane</keyword>
<keyword id="KW-0519">Myristate</keyword>
<keyword id="KW-1185">Reference proteome</keyword>
<organism>
    <name type="scientific">Danio rerio</name>
    <name type="common">Zebrafish</name>
    <name type="synonym">Brachydanio rerio</name>
    <dbReference type="NCBI Taxonomy" id="7955"/>
    <lineage>
        <taxon>Eukaryota</taxon>
        <taxon>Metazoa</taxon>
        <taxon>Chordata</taxon>
        <taxon>Craniata</taxon>
        <taxon>Vertebrata</taxon>
        <taxon>Euteleostomi</taxon>
        <taxon>Actinopterygii</taxon>
        <taxon>Neopterygii</taxon>
        <taxon>Teleostei</taxon>
        <taxon>Ostariophysi</taxon>
        <taxon>Cypriniformes</taxon>
        <taxon>Danionidae</taxon>
        <taxon>Danioninae</taxon>
        <taxon>Danio</taxon>
    </lineage>
</organism>
<proteinExistence type="evidence at transcript level"/>
<protein>
    <recommendedName>
        <fullName>Formin-like protein 3</fullName>
    </recommendedName>
    <alternativeName>
        <fullName>Formin homology 2 domain-containing protein 3</fullName>
    </alternativeName>
</protein>
<gene>
    <name type="primary">fmnl3</name>
    <name type="synonym">frl2</name>
    <name type="ORF">si:ch73-60e21.1</name>
</gene>
<evidence type="ECO:0000250" key="1">
    <source>
        <dbReference type="UniProtKB" id="Q8IVF7"/>
    </source>
</evidence>
<evidence type="ECO:0000255" key="2"/>
<evidence type="ECO:0000255" key="3">
    <source>
        <dbReference type="PROSITE-ProRule" id="PRU00577"/>
    </source>
</evidence>
<evidence type="ECO:0000255" key="4">
    <source>
        <dbReference type="PROSITE-ProRule" id="PRU00579"/>
    </source>
</evidence>
<evidence type="ECO:0000255" key="5">
    <source>
        <dbReference type="PROSITE-ProRule" id="PRU00774"/>
    </source>
</evidence>
<evidence type="ECO:0000256" key="6">
    <source>
        <dbReference type="SAM" id="MobiDB-lite"/>
    </source>
</evidence>
<evidence type="ECO:0000269" key="7">
    <source>
    </source>
</evidence>
<evidence type="ECO:0000305" key="8"/>
<sequence>MGNIESVDGQSEMKHHIMPLKVPMPDPTELEERFAIVLNSMNLPPDKARLLRQYDNEKKWDLICDQERFQVKNPPHTYIQKLRGYLDPKVTRKKFRRRVQESTKVLRELEISLRTNHIGWVREFLNDENRGLDILVEYLSFAQCAVMLDFEGLENGEDFSLDKAKSWSRSIEDLHQNGCNTLVRSARQSVLRYGSTSNSKTIKNSRLVSQKDDVHVCIMCLRAIMNYQYGFNLVMSHAHAVNEIALSLNNKNPRTKALVLELLAAVCLVRGGHEIILSAFDNFKEVCKEKHRFEKLMEYFRSEDGNIDFMVACMQFINIVVHSVEDMNFRVHLQYEFTKLGLDDFLEKSKHTESDKLSVQIQAYLDNVFDVGGLLEDAETKNVALEKVEELEEHLSHVTEKLLDVENETMTKVADLEKQLLHKDKELAVIKETYESASTQVHTLRRMIQEKDAAFQRHNNIEKQLLELEQQGTIRLRKQPDGDIAIETLGAGAVAGTPLTDLRSLTVGMSTIGGLGGTSAVPVEAVAPPPPPPPPPPPPPPAPPLPSEVESIPIPPPPPPPLPGPSPSVILSVGLSAIRIKKPIKTKFRLPVFNWTALKPNQINGTVFNEIDDDRVLEELDLEKFEELFKTKAQGPVVDLSCSKSKVSQKVINKVQLLDANRSKNLAITLRKANKTTEEICKAIQTFDLKALPVDFVECLMRFLPTEAESKLLRQYERERRPLDQLAEEDRFMLLFSKIERLTQRMSIITFVGNFNDNVNMLTPQLNAIIAASASVKSSPKLKKILEIILALGNYMNSSKRGSVYGFKLQSLDLLLDTKSTDRKMTLLHYIALVVKEKYPELANFYNELHFVDKAAAVSLENVLLDVKELGKGMDLVRRECSLHDHAVLKGFAQTSDTQLDKLAKDAKTAEEAFNNVVLYFGESPKTTPPSVFFPVFVRFIRAYKEAVEENEQRKKQEEAMREKLLAQEAKQHDPKVQAQKKRHQQQELIAELRRRQAKDHRPVYEGKDGTIEDIITVLKSVPFTARTAKRGSRFFCDANLFDESIC</sequence>
<dbReference type="EMBL" id="CR457457">
    <property type="status" value="NOT_ANNOTATED_CDS"/>
    <property type="molecule type" value="Genomic_DNA"/>
</dbReference>
<dbReference type="EMBL" id="CT573346">
    <property type="status" value="NOT_ANNOTATED_CDS"/>
    <property type="molecule type" value="Genomic_DNA"/>
</dbReference>
<dbReference type="EMBL" id="BC067154">
    <property type="protein sequence ID" value="AAH67154.1"/>
    <property type="molecule type" value="mRNA"/>
</dbReference>
<dbReference type="RefSeq" id="NP_001333083.1">
    <property type="nucleotide sequence ID" value="NM_001346154.1"/>
</dbReference>
<dbReference type="SMR" id="Q6NXC0"/>
<dbReference type="FunCoup" id="Q6NXC0">
    <property type="interactions" value="1229"/>
</dbReference>
<dbReference type="STRING" id="7955.ENSDARP00000099869"/>
<dbReference type="PaxDb" id="7955-ENSDARP00000099869"/>
<dbReference type="Ensembl" id="ENSDART00000109023">
    <property type="protein sequence ID" value="ENSDARP00000099869"/>
    <property type="gene ID" value="ENSDARG00000004372"/>
</dbReference>
<dbReference type="GeneID" id="407694"/>
<dbReference type="KEGG" id="dre:407694"/>
<dbReference type="AGR" id="ZFIN:ZDB-GENE-030131-1571"/>
<dbReference type="CTD" id="91010"/>
<dbReference type="ZFIN" id="ZDB-GENE-030131-1571">
    <property type="gene designation" value="fmnl3"/>
</dbReference>
<dbReference type="eggNOG" id="KOG1923">
    <property type="taxonomic scope" value="Eukaryota"/>
</dbReference>
<dbReference type="InParanoid" id="Q6NXC0"/>
<dbReference type="OMA" id="ELANFWH"/>
<dbReference type="OrthoDB" id="1104827at2759"/>
<dbReference type="Reactome" id="R-DRE-8980692">
    <property type="pathway name" value="RHOA GTPase cycle"/>
</dbReference>
<dbReference type="PRO" id="PR:Q6NXC0"/>
<dbReference type="Proteomes" id="UP000000437">
    <property type="component" value="Chromosome 23"/>
</dbReference>
<dbReference type="Bgee" id="ENSDARG00000004372">
    <property type="expression patterns" value="Expressed in swim bladder and 48 other cell types or tissues"/>
</dbReference>
<dbReference type="ExpressionAtlas" id="Q6NXC0">
    <property type="expression patterns" value="baseline and differential"/>
</dbReference>
<dbReference type="GO" id="GO:0005829">
    <property type="term" value="C:cytosol"/>
    <property type="evidence" value="ECO:0000318"/>
    <property type="project" value="GO_Central"/>
</dbReference>
<dbReference type="GO" id="GO:0005886">
    <property type="term" value="C:plasma membrane"/>
    <property type="evidence" value="ECO:0007669"/>
    <property type="project" value="UniProtKB-SubCell"/>
</dbReference>
<dbReference type="GO" id="GO:0051015">
    <property type="term" value="F:actin filament binding"/>
    <property type="evidence" value="ECO:0000318"/>
    <property type="project" value="GO_Central"/>
</dbReference>
<dbReference type="GO" id="GO:0031267">
    <property type="term" value="F:small GTPase binding"/>
    <property type="evidence" value="ECO:0007669"/>
    <property type="project" value="InterPro"/>
</dbReference>
<dbReference type="GO" id="GO:0030041">
    <property type="term" value="P:actin filament polymerization"/>
    <property type="evidence" value="ECO:0000314"/>
    <property type="project" value="ZFIN"/>
</dbReference>
<dbReference type="GO" id="GO:0001525">
    <property type="term" value="P:angiogenesis"/>
    <property type="evidence" value="ECO:0000315"/>
    <property type="project" value="ZFIN"/>
</dbReference>
<dbReference type="GO" id="GO:0016477">
    <property type="term" value="P:cell migration"/>
    <property type="evidence" value="ECO:0000318"/>
    <property type="project" value="GO_Central"/>
</dbReference>
<dbReference type="GO" id="GO:0030866">
    <property type="term" value="P:cortical actin cytoskeleton organization"/>
    <property type="evidence" value="ECO:0000318"/>
    <property type="project" value="GO_Central"/>
</dbReference>
<dbReference type="GO" id="GO:0046847">
    <property type="term" value="P:filopodium assembly"/>
    <property type="evidence" value="ECO:0000315"/>
    <property type="project" value="ZFIN"/>
</dbReference>
<dbReference type="GO" id="GO:0008360">
    <property type="term" value="P:regulation of cell shape"/>
    <property type="evidence" value="ECO:0000318"/>
    <property type="project" value="GO_Central"/>
</dbReference>
<dbReference type="GO" id="GO:0002040">
    <property type="term" value="P:sprouting angiogenesis"/>
    <property type="evidence" value="ECO:0000315"/>
    <property type="project" value="ZFIN"/>
</dbReference>
<dbReference type="FunFam" id="1.20.58.2220:FF:000001">
    <property type="entry name" value="Formin-like 1, isoform CRA_c"/>
    <property type="match status" value="1"/>
</dbReference>
<dbReference type="FunFam" id="1.25.10.10:FF:000036">
    <property type="entry name" value="Formin-like protein 3 isoform 1"/>
    <property type="match status" value="1"/>
</dbReference>
<dbReference type="FunFam" id="1.25.10.10:FF:000045">
    <property type="entry name" value="Formin-like protein 3 isoform 1"/>
    <property type="match status" value="1"/>
</dbReference>
<dbReference type="Gene3D" id="1.20.58.2220">
    <property type="entry name" value="Formin, FH2 domain"/>
    <property type="match status" value="1"/>
</dbReference>
<dbReference type="Gene3D" id="1.25.10.10">
    <property type="entry name" value="Leucine-rich Repeat Variant"/>
    <property type="match status" value="1"/>
</dbReference>
<dbReference type="InterPro" id="IPR011989">
    <property type="entry name" value="ARM-like"/>
</dbReference>
<dbReference type="InterPro" id="IPR016024">
    <property type="entry name" value="ARM-type_fold"/>
</dbReference>
<dbReference type="InterPro" id="IPR014767">
    <property type="entry name" value="DAD_dom"/>
</dbReference>
<dbReference type="InterPro" id="IPR015425">
    <property type="entry name" value="FH2_Formin"/>
</dbReference>
<dbReference type="InterPro" id="IPR042201">
    <property type="entry name" value="FH2_Formin_sf"/>
</dbReference>
<dbReference type="InterPro" id="IPR010472">
    <property type="entry name" value="FH3_dom"/>
</dbReference>
<dbReference type="InterPro" id="IPR043592">
    <property type="entry name" value="FMNL_animal"/>
</dbReference>
<dbReference type="InterPro" id="IPR014768">
    <property type="entry name" value="GBD/FH3_dom"/>
</dbReference>
<dbReference type="InterPro" id="IPR010473">
    <property type="entry name" value="GTPase-bd"/>
</dbReference>
<dbReference type="PANTHER" id="PTHR45857">
    <property type="entry name" value="FORMIN-LIKE PROTEIN"/>
    <property type="match status" value="1"/>
</dbReference>
<dbReference type="PANTHER" id="PTHR45857:SF3">
    <property type="entry name" value="FORMIN-LIKE PROTEIN 3"/>
    <property type="match status" value="1"/>
</dbReference>
<dbReference type="Pfam" id="PF06367">
    <property type="entry name" value="Drf_FH3"/>
    <property type="match status" value="1"/>
</dbReference>
<dbReference type="Pfam" id="PF06371">
    <property type="entry name" value="Drf_GBD"/>
    <property type="match status" value="2"/>
</dbReference>
<dbReference type="Pfam" id="PF02181">
    <property type="entry name" value="FH2"/>
    <property type="match status" value="1"/>
</dbReference>
<dbReference type="SMART" id="SM01139">
    <property type="entry name" value="Drf_FH3"/>
    <property type="match status" value="1"/>
</dbReference>
<dbReference type="SMART" id="SM01140">
    <property type="entry name" value="Drf_GBD"/>
    <property type="match status" value="1"/>
</dbReference>
<dbReference type="SMART" id="SM00498">
    <property type="entry name" value="FH2"/>
    <property type="match status" value="1"/>
</dbReference>
<dbReference type="SUPFAM" id="SSF48371">
    <property type="entry name" value="ARM repeat"/>
    <property type="match status" value="1"/>
</dbReference>
<dbReference type="SUPFAM" id="SSF101447">
    <property type="entry name" value="Formin homology 2 domain (FH2 domain)"/>
    <property type="match status" value="1"/>
</dbReference>
<dbReference type="PROSITE" id="PS51231">
    <property type="entry name" value="DAD"/>
    <property type="match status" value="1"/>
</dbReference>
<dbReference type="PROSITE" id="PS51444">
    <property type="entry name" value="FH2"/>
    <property type="match status" value="1"/>
</dbReference>
<dbReference type="PROSITE" id="PS51232">
    <property type="entry name" value="GBD_FH3"/>
    <property type="match status" value="1"/>
</dbReference>
<accession>Q6NXC0</accession>